<gene>
    <name type="primary">TXN</name>
    <name type="synonym">TRX</name>
</gene>
<protein>
    <recommendedName>
        <fullName>Thioredoxin</fullName>
        <shortName>Trx</shortName>
    </recommendedName>
</protein>
<reference key="1">
    <citation type="journal article" date="2001" name="Mol. Hum. Reprod.">
        <title>Expression and localization of thioredoxin during early implantation in the marmoset monkey.</title>
        <authorList>
            <person name="Lopata A."/>
            <person name="Sibson M.C."/>
            <person name="Enders A.C."/>
            <person name="Bloomfield K.L."/>
            <person name="Gregory M.S."/>
            <person name="Trapani G.D."/>
            <person name="Perkins A.V."/>
            <person name="Tonissen K.F."/>
            <person name="Clarke F.M."/>
        </authorList>
    </citation>
    <scope>NUCLEOTIDE SEQUENCE [MRNA]</scope>
</reference>
<feature type="chain" id="PRO_0000120003" description="Thioredoxin">
    <location>
        <begin position="1"/>
        <end position="105"/>
    </location>
</feature>
<feature type="domain" description="Thioredoxin" evidence="4">
    <location>
        <begin position="2"/>
        <end position="105"/>
    </location>
</feature>
<feature type="active site" description="Nucleophile" evidence="1">
    <location>
        <position position="32"/>
    </location>
</feature>
<feature type="active site" description="Nucleophile" evidence="1">
    <location>
        <position position="35"/>
    </location>
</feature>
<feature type="site" description="Deprotonates C-terminal active site Cys" evidence="1">
    <location>
        <position position="26"/>
    </location>
</feature>
<feature type="site" description="Contributes to redox potential value" evidence="1">
    <location>
        <position position="33"/>
    </location>
</feature>
<feature type="site" description="Contributes to redox potential value" evidence="1">
    <location>
        <position position="34"/>
    </location>
</feature>
<feature type="modified residue" description="N6-acetyllysine" evidence="2">
    <location>
        <position position="3"/>
    </location>
</feature>
<feature type="modified residue" description="N6-succinyllysine" evidence="3">
    <location>
        <position position="8"/>
    </location>
</feature>
<feature type="modified residue" description="N6-acetyllysine" evidence="2">
    <location>
        <position position="39"/>
    </location>
</feature>
<feature type="modified residue" description="S-nitrosocysteine" evidence="2">
    <location>
        <position position="62"/>
    </location>
</feature>
<feature type="modified residue" description="S-nitrosocysteine" evidence="2">
    <location>
        <position position="69"/>
    </location>
</feature>
<feature type="modified residue" description="S-nitrosocysteine; alternate" evidence="2">
    <location>
        <position position="73"/>
    </location>
</feature>
<feature type="modified residue" description="N6-acetyllysine; alternate" evidence="3">
    <location>
        <position position="94"/>
    </location>
</feature>
<feature type="modified residue" description="N6-succinyllysine; alternate" evidence="3">
    <location>
        <position position="94"/>
    </location>
</feature>
<feature type="disulfide bond" description="Redox-active" evidence="4">
    <location>
        <begin position="32"/>
        <end position="35"/>
    </location>
</feature>
<feature type="disulfide bond" description="Interchain; alternate" evidence="1">
    <location>
        <position position="73"/>
    </location>
</feature>
<accession>Q9BDJ3</accession>
<name>THIO_CALJA</name>
<comment type="function">
    <text evidence="1">Participates in various redox reactions through the reversible oxidation of its active center dithiol to a disulfide and catalyzes dithiol-disulfide exchange reactions (By similarity). Plays a role in the reversible S-nitrosylation of cysteine residues in target proteins, and thereby contributes to the response to intracellular nitric oxide. Nitrosylates the active site Cys of CASP3 in response to nitric oxide (NO), and thereby inhibits caspase-3 activity. Induces the FOS/JUN AP-1 DNA binding activity in ionizing radiation (IR) cells through its oxidation/reduction status and stimulates AP-1 transcriptional activity (By similarity).</text>
</comment>
<comment type="subunit">
    <text evidence="1">Homodimer; disulfide-linked. Interacts with TXNIP through the redox-active site. Interacts with MAP3K5 and CASP3. Interacts with APEX1; the interaction stimulates the FOS/JUN AP-1 DNA-binding activity in a redox-dependent manner (By similarity).</text>
</comment>
<comment type="subcellular location">
    <subcellularLocation>
        <location evidence="2">Nucleus</location>
    </subcellularLocation>
    <subcellularLocation>
        <location evidence="2">Cytoplasm</location>
    </subcellularLocation>
    <subcellularLocation>
        <location evidence="2">Secreted</location>
    </subcellularLocation>
    <text evidence="2">Translocates from the cytoplasm into the nucleus after phorbol 12-myristate 13-acetate induction (PMA). Predominantly in the cytoplasm in non irradiated cells. Radiation induces translocation of TRX from the cytoplasm to the nucleus. Secreted by a leaderless secretory pathway.</text>
</comment>
<comment type="PTM">
    <text evidence="1">In the fully reduced protein, both Cys-69 and Cys-73 are nitrosylated in response to nitric oxide (NO). When two disulfide bonds are present in the protein, only Cys-73 is nitrosylated. Cys-73 can serve as donor for nitrosylation of target proteins (By similarity).</text>
</comment>
<comment type="similarity">
    <text evidence="5">Belongs to the thioredoxin family.</text>
</comment>
<evidence type="ECO:0000250" key="1"/>
<evidence type="ECO:0000250" key="2">
    <source>
        <dbReference type="UniProtKB" id="P10599"/>
    </source>
</evidence>
<evidence type="ECO:0000250" key="3">
    <source>
        <dbReference type="UniProtKB" id="P10639"/>
    </source>
</evidence>
<evidence type="ECO:0000255" key="4">
    <source>
        <dbReference type="PROSITE-ProRule" id="PRU00691"/>
    </source>
</evidence>
<evidence type="ECO:0000305" key="5"/>
<proteinExistence type="inferred from homology"/>
<sequence length="105" mass="11757">MVKQIDSKDAFQEALDAAGDKLVVVDFSATWCGPCKMIKPFFHSLSEKYSNVVFLEVDVDDCQDVASECEVKCMPTFQFFKKGQKVGEFSGANKEKLEATINEFV</sequence>
<keyword id="KW-0007">Acetylation</keyword>
<keyword id="KW-0010">Activator</keyword>
<keyword id="KW-0963">Cytoplasm</keyword>
<keyword id="KW-1015">Disulfide bond</keyword>
<keyword id="KW-0249">Electron transport</keyword>
<keyword id="KW-0539">Nucleus</keyword>
<keyword id="KW-0676">Redox-active center</keyword>
<keyword id="KW-1185">Reference proteome</keyword>
<keyword id="KW-0702">S-nitrosylation</keyword>
<keyword id="KW-0964">Secreted</keyword>
<keyword id="KW-0804">Transcription</keyword>
<keyword id="KW-0805">Transcription regulation</keyword>
<keyword id="KW-0813">Transport</keyword>
<organism>
    <name type="scientific">Callithrix jacchus</name>
    <name type="common">White-tufted-ear marmoset</name>
    <dbReference type="NCBI Taxonomy" id="9483"/>
    <lineage>
        <taxon>Eukaryota</taxon>
        <taxon>Metazoa</taxon>
        <taxon>Chordata</taxon>
        <taxon>Craniata</taxon>
        <taxon>Vertebrata</taxon>
        <taxon>Euteleostomi</taxon>
        <taxon>Mammalia</taxon>
        <taxon>Eutheria</taxon>
        <taxon>Euarchontoglires</taxon>
        <taxon>Primates</taxon>
        <taxon>Haplorrhini</taxon>
        <taxon>Platyrrhini</taxon>
        <taxon>Cebidae</taxon>
        <taxon>Callitrichinae</taxon>
        <taxon>Callithrix</taxon>
        <taxon>Callithrix</taxon>
    </lineage>
</organism>
<dbReference type="EMBL" id="AF353204">
    <property type="protein sequence ID" value="AAK30295.1"/>
    <property type="molecule type" value="mRNA"/>
</dbReference>
<dbReference type="RefSeq" id="XP_002743237.1">
    <property type="nucleotide sequence ID" value="XM_002743191.6"/>
</dbReference>
<dbReference type="SMR" id="Q9BDJ3"/>
<dbReference type="FunCoup" id="Q9BDJ3">
    <property type="interactions" value="2115"/>
</dbReference>
<dbReference type="STRING" id="9483.ENSCJAP00000031890"/>
<dbReference type="Ensembl" id="ENSCJAT00000033707.5">
    <property type="protein sequence ID" value="ENSCJAP00000031890.4"/>
    <property type="gene ID" value="ENSCJAG00000017321.5"/>
</dbReference>
<dbReference type="GeneID" id="100413131"/>
<dbReference type="KEGG" id="cjc:100413131"/>
<dbReference type="CTD" id="7295"/>
<dbReference type="eggNOG" id="KOG0907">
    <property type="taxonomic scope" value="Eukaryota"/>
</dbReference>
<dbReference type="GeneTree" id="ENSGT00940000154259"/>
<dbReference type="HOGENOM" id="CLU_090389_14_6_1"/>
<dbReference type="InParanoid" id="Q9BDJ3"/>
<dbReference type="OrthoDB" id="2121326at2759"/>
<dbReference type="TreeFam" id="TF318932"/>
<dbReference type="Proteomes" id="UP000008225">
    <property type="component" value="Chromosome 1"/>
</dbReference>
<dbReference type="GO" id="GO:0005737">
    <property type="term" value="C:cytoplasm"/>
    <property type="evidence" value="ECO:0007669"/>
    <property type="project" value="UniProtKB-SubCell"/>
</dbReference>
<dbReference type="GO" id="GO:0005576">
    <property type="term" value="C:extracellular region"/>
    <property type="evidence" value="ECO:0007669"/>
    <property type="project" value="UniProtKB-SubCell"/>
</dbReference>
<dbReference type="GO" id="GO:0005634">
    <property type="term" value="C:nucleus"/>
    <property type="evidence" value="ECO:0007669"/>
    <property type="project" value="UniProtKB-SubCell"/>
</dbReference>
<dbReference type="GO" id="GO:0015035">
    <property type="term" value="F:protein-disulfide reductase activity"/>
    <property type="evidence" value="ECO:0007669"/>
    <property type="project" value="InterPro"/>
</dbReference>
<dbReference type="GO" id="GO:0043388">
    <property type="term" value="P:positive regulation of DNA binding"/>
    <property type="evidence" value="ECO:0000250"/>
    <property type="project" value="UniProtKB"/>
</dbReference>
<dbReference type="GO" id="GO:0009314">
    <property type="term" value="P:response to radiation"/>
    <property type="evidence" value="ECO:0000250"/>
    <property type="project" value="UniProtKB"/>
</dbReference>
<dbReference type="CDD" id="cd02947">
    <property type="entry name" value="TRX_family"/>
    <property type="match status" value="1"/>
</dbReference>
<dbReference type="FunFam" id="3.40.30.10:FF:000130">
    <property type="entry name" value="Thioredoxin"/>
    <property type="match status" value="1"/>
</dbReference>
<dbReference type="Gene3D" id="3.40.30.10">
    <property type="entry name" value="Glutaredoxin"/>
    <property type="match status" value="1"/>
</dbReference>
<dbReference type="InterPro" id="IPR005746">
    <property type="entry name" value="Thioredoxin"/>
</dbReference>
<dbReference type="InterPro" id="IPR036249">
    <property type="entry name" value="Thioredoxin-like_sf"/>
</dbReference>
<dbReference type="InterPro" id="IPR017937">
    <property type="entry name" value="Thioredoxin_CS"/>
</dbReference>
<dbReference type="InterPro" id="IPR013766">
    <property type="entry name" value="Thioredoxin_domain"/>
</dbReference>
<dbReference type="PANTHER" id="PTHR46115">
    <property type="entry name" value="THIOREDOXIN-LIKE PROTEIN 1"/>
    <property type="match status" value="1"/>
</dbReference>
<dbReference type="Pfam" id="PF00085">
    <property type="entry name" value="Thioredoxin"/>
    <property type="match status" value="1"/>
</dbReference>
<dbReference type="PIRSF" id="PIRSF000077">
    <property type="entry name" value="Thioredoxin"/>
    <property type="match status" value="1"/>
</dbReference>
<dbReference type="PRINTS" id="PR00421">
    <property type="entry name" value="THIOREDOXIN"/>
</dbReference>
<dbReference type="SUPFAM" id="SSF52833">
    <property type="entry name" value="Thioredoxin-like"/>
    <property type="match status" value="1"/>
</dbReference>
<dbReference type="PROSITE" id="PS00194">
    <property type="entry name" value="THIOREDOXIN_1"/>
    <property type="match status" value="1"/>
</dbReference>
<dbReference type="PROSITE" id="PS51352">
    <property type="entry name" value="THIOREDOXIN_2"/>
    <property type="match status" value="1"/>
</dbReference>